<organism>
    <name type="scientific">Brevibacillus brevis (strain 47 / JCM 6285 / NBRC 100599)</name>
    <dbReference type="NCBI Taxonomy" id="358681"/>
    <lineage>
        <taxon>Bacteria</taxon>
        <taxon>Bacillati</taxon>
        <taxon>Bacillota</taxon>
        <taxon>Bacilli</taxon>
        <taxon>Bacillales</taxon>
        <taxon>Paenibacillaceae</taxon>
        <taxon>Brevibacillus</taxon>
    </lineage>
</organism>
<proteinExistence type="inferred from homology"/>
<evidence type="ECO:0000255" key="1">
    <source>
        <dbReference type="HAMAP-Rule" id="MF_01025"/>
    </source>
</evidence>
<dbReference type="EC" id="2.3.3.13" evidence="1"/>
<dbReference type="EMBL" id="AP008955">
    <property type="protein sequence ID" value="BAH42598.1"/>
    <property type="molecule type" value="Genomic_DNA"/>
</dbReference>
<dbReference type="RefSeq" id="WP_012685346.1">
    <property type="nucleotide sequence ID" value="NC_012491.1"/>
</dbReference>
<dbReference type="SMR" id="C0Z9C8"/>
<dbReference type="STRING" id="358681.BBR47_16210"/>
<dbReference type="KEGG" id="bbe:BBR47_16210"/>
<dbReference type="eggNOG" id="COG0119">
    <property type="taxonomic scope" value="Bacteria"/>
</dbReference>
<dbReference type="HOGENOM" id="CLU_022158_0_1_9"/>
<dbReference type="UniPathway" id="UPA00048">
    <property type="reaction ID" value="UER00070"/>
</dbReference>
<dbReference type="Proteomes" id="UP000001877">
    <property type="component" value="Chromosome"/>
</dbReference>
<dbReference type="GO" id="GO:0005737">
    <property type="term" value="C:cytoplasm"/>
    <property type="evidence" value="ECO:0007669"/>
    <property type="project" value="UniProtKB-SubCell"/>
</dbReference>
<dbReference type="GO" id="GO:0003852">
    <property type="term" value="F:2-isopropylmalate synthase activity"/>
    <property type="evidence" value="ECO:0007669"/>
    <property type="project" value="UniProtKB-UniRule"/>
</dbReference>
<dbReference type="GO" id="GO:0003985">
    <property type="term" value="F:acetyl-CoA C-acetyltransferase activity"/>
    <property type="evidence" value="ECO:0007669"/>
    <property type="project" value="UniProtKB-UniRule"/>
</dbReference>
<dbReference type="GO" id="GO:0030145">
    <property type="term" value="F:manganese ion binding"/>
    <property type="evidence" value="ECO:0007669"/>
    <property type="project" value="UniProtKB-UniRule"/>
</dbReference>
<dbReference type="GO" id="GO:0009098">
    <property type="term" value="P:L-leucine biosynthetic process"/>
    <property type="evidence" value="ECO:0007669"/>
    <property type="project" value="UniProtKB-UniRule"/>
</dbReference>
<dbReference type="CDD" id="cd07940">
    <property type="entry name" value="DRE_TIM_IPMS"/>
    <property type="match status" value="1"/>
</dbReference>
<dbReference type="FunFam" id="1.10.238.260:FF:000001">
    <property type="entry name" value="2-isopropylmalate synthase"/>
    <property type="match status" value="1"/>
</dbReference>
<dbReference type="FunFam" id="3.20.20.70:FF:000010">
    <property type="entry name" value="2-isopropylmalate synthase"/>
    <property type="match status" value="1"/>
</dbReference>
<dbReference type="FunFam" id="3.30.160.270:FF:000003">
    <property type="entry name" value="2-isopropylmalate synthase"/>
    <property type="match status" value="1"/>
</dbReference>
<dbReference type="Gene3D" id="1.10.238.260">
    <property type="match status" value="1"/>
</dbReference>
<dbReference type="Gene3D" id="3.30.160.270">
    <property type="match status" value="1"/>
</dbReference>
<dbReference type="Gene3D" id="3.20.20.70">
    <property type="entry name" value="Aldolase class I"/>
    <property type="match status" value="1"/>
</dbReference>
<dbReference type="HAMAP" id="MF_01025">
    <property type="entry name" value="LeuA_type1"/>
    <property type="match status" value="1"/>
</dbReference>
<dbReference type="InterPro" id="IPR050073">
    <property type="entry name" value="2-IPM_HCS-like"/>
</dbReference>
<dbReference type="InterPro" id="IPR013709">
    <property type="entry name" value="2-isopropylmalate_synth_dimer"/>
</dbReference>
<dbReference type="InterPro" id="IPR002034">
    <property type="entry name" value="AIPM/Hcit_synth_CS"/>
</dbReference>
<dbReference type="InterPro" id="IPR013785">
    <property type="entry name" value="Aldolase_TIM"/>
</dbReference>
<dbReference type="InterPro" id="IPR054691">
    <property type="entry name" value="LeuA/HCS_post-cat"/>
</dbReference>
<dbReference type="InterPro" id="IPR036230">
    <property type="entry name" value="LeuA_allosteric_dom_sf"/>
</dbReference>
<dbReference type="InterPro" id="IPR005671">
    <property type="entry name" value="LeuA_bact_synth"/>
</dbReference>
<dbReference type="InterPro" id="IPR000891">
    <property type="entry name" value="PYR_CT"/>
</dbReference>
<dbReference type="NCBIfam" id="TIGR00973">
    <property type="entry name" value="leuA_bact"/>
    <property type="match status" value="1"/>
</dbReference>
<dbReference type="NCBIfam" id="NF002085">
    <property type="entry name" value="PRK00915.1-2"/>
    <property type="match status" value="1"/>
</dbReference>
<dbReference type="NCBIfam" id="NF002086">
    <property type="entry name" value="PRK00915.1-3"/>
    <property type="match status" value="1"/>
</dbReference>
<dbReference type="NCBIfam" id="NF002088">
    <property type="entry name" value="PRK00915.1-5"/>
    <property type="match status" value="1"/>
</dbReference>
<dbReference type="PANTHER" id="PTHR10277:SF9">
    <property type="entry name" value="2-ISOPROPYLMALATE SYNTHASE 1, CHLOROPLASTIC-RELATED"/>
    <property type="match status" value="1"/>
</dbReference>
<dbReference type="PANTHER" id="PTHR10277">
    <property type="entry name" value="HOMOCITRATE SYNTHASE-RELATED"/>
    <property type="match status" value="1"/>
</dbReference>
<dbReference type="Pfam" id="PF22617">
    <property type="entry name" value="HCS_D2"/>
    <property type="match status" value="1"/>
</dbReference>
<dbReference type="Pfam" id="PF00682">
    <property type="entry name" value="HMGL-like"/>
    <property type="match status" value="1"/>
</dbReference>
<dbReference type="Pfam" id="PF08502">
    <property type="entry name" value="LeuA_dimer"/>
    <property type="match status" value="1"/>
</dbReference>
<dbReference type="SMART" id="SM00917">
    <property type="entry name" value="LeuA_dimer"/>
    <property type="match status" value="1"/>
</dbReference>
<dbReference type="SUPFAM" id="SSF110921">
    <property type="entry name" value="2-isopropylmalate synthase LeuA, allosteric (dimerisation) domain"/>
    <property type="match status" value="1"/>
</dbReference>
<dbReference type="SUPFAM" id="SSF51569">
    <property type="entry name" value="Aldolase"/>
    <property type="match status" value="1"/>
</dbReference>
<dbReference type="PROSITE" id="PS00815">
    <property type="entry name" value="AIPM_HOMOCIT_SYNTH_1"/>
    <property type="match status" value="1"/>
</dbReference>
<dbReference type="PROSITE" id="PS00816">
    <property type="entry name" value="AIPM_HOMOCIT_SYNTH_2"/>
    <property type="match status" value="1"/>
</dbReference>
<dbReference type="PROSITE" id="PS50991">
    <property type="entry name" value="PYR_CT"/>
    <property type="match status" value="1"/>
</dbReference>
<protein>
    <recommendedName>
        <fullName evidence="1">2-isopropylmalate synthase</fullName>
        <ecNumber evidence="1">2.3.3.13</ecNumber>
    </recommendedName>
    <alternativeName>
        <fullName evidence="1">Alpha-IPM synthase</fullName>
    </alternativeName>
    <alternativeName>
        <fullName evidence="1">Alpha-isopropylmalate synthase</fullName>
    </alternativeName>
</protein>
<gene>
    <name evidence="1" type="primary">leuA</name>
    <name type="ordered locus">BBR47_16210</name>
</gene>
<name>LEU1_BREBN</name>
<accession>C0Z9C8</accession>
<keyword id="KW-0028">Amino-acid biosynthesis</keyword>
<keyword id="KW-0100">Branched-chain amino acid biosynthesis</keyword>
<keyword id="KW-0963">Cytoplasm</keyword>
<keyword id="KW-0432">Leucine biosynthesis</keyword>
<keyword id="KW-0464">Manganese</keyword>
<keyword id="KW-0479">Metal-binding</keyword>
<keyword id="KW-1185">Reference proteome</keyword>
<keyword id="KW-0808">Transferase</keyword>
<reference key="1">
    <citation type="submission" date="2005-03" db="EMBL/GenBank/DDBJ databases">
        <title>Brevibacillus brevis strain 47, complete genome.</title>
        <authorList>
            <person name="Hosoyama A."/>
            <person name="Yamada R."/>
            <person name="Hongo Y."/>
            <person name="Terui Y."/>
            <person name="Ankai A."/>
            <person name="Masuyama W."/>
            <person name="Sekiguchi M."/>
            <person name="Takeda T."/>
            <person name="Asano K."/>
            <person name="Ohji S."/>
            <person name="Ichikawa N."/>
            <person name="Narita S."/>
            <person name="Aoki N."/>
            <person name="Miura H."/>
            <person name="Matsushita S."/>
            <person name="Sekigawa T."/>
            <person name="Yamagata H."/>
            <person name="Yoshikawa H."/>
            <person name="Udaka S."/>
            <person name="Tanikawa S."/>
            <person name="Fujita N."/>
        </authorList>
    </citation>
    <scope>NUCLEOTIDE SEQUENCE [LARGE SCALE GENOMIC DNA]</scope>
    <source>
        <strain>47 / JCM 6285 / NBRC 100599</strain>
    </source>
</reference>
<feature type="chain" id="PRO_1000149143" description="2-isopropylmalate synthase">
    <location>
        <begin position="1"/>
        <end position="512"/>
    </location>
</feature>
<feature type="domain" description="Pyruvate carboxyltransferase" evidence="1">
    <location>
        <begin position="4"/>
        <end position="266"/>
    </location>
</feature>
<feature type="region of interest" description="Regulatory domain" evidence="1">
    <location>
        <begin position="390"/>
        <end position="512"/>
    </location>
</feature>
<feature type="binding site" evidence="1">
    <location>
        <position position="13"/>
    </location>
    <ligand>
        <name>Mn(2+)</name>
        <dbReference type="ChEBI" id="CHEBI:29035"/>
    </ligand>
</feature>
<feature type="binding site" evidence="1">
    <location>
        <position position="201"/>
    </location>
    <ligand>
        <name>Mn(2+)</name>
        <dbReference type="ChEBI" id="CHEBI:29035"/>
    </ligand>
</feature>
<feature type="binding site" evidence="1">
    <location>
        <position position="203"/>
    </location>
    <ligand>
        <name>Mn(2+)</name>
        <dbReference type="ChEBI" id="CHEBI:29035"/>
    </ligand>
</feature>
<feature type="binding site" evidence="1">
    <location>
        <position position="237"/>
    </location>
    <ligand>
        <name>Mn(2+)</name>
        <dbReference type="ChEBI" id="CHEBI:29035"/>
    </ligand>
</feature>
<sequence length="512" mass="55495">MRTIEIFDTTLRDGEQSPGVNISTNEKVEIALQLEKLGVNRMEAGFAAASPGDQKSVAEVAKRVKNATVVSLARAVKDDMDKAYEALRNAQNASLHVFLATSPIHRQFKLNMSKEEVLARAVEAVTYAKKYFTEVQFSAEDAARTEIDFLAEVVEAVIKAGATTVNIPDTVGYMTPYQYGNIFRELKKRVPSTDLIRLSCHCHDDLGMAVANSLAAVEGGATQVEGTINGIGERAGNAALEEVALALETRKDYYQATTKLNLKEIARTSQLVSRLTGMIVPGNKAVVGANAFAHESGIHQDGVLKEVTTYEIIRPESVGFKSNKLVLGKHSGRHAFKEKLVDLGYHLEQEEVNAAFAAFKVLCDKKKEITDDDILALVDSKMVRGPEAFQLESVQLAYGNISVPTASVRLVRADGSVCEEAACGNGSVDSIYKAIDRATGEEVSLVDYKILSVTHGQDALGEVFVRLQQDDLIVTGRGVSTDVLEASAIAYVRAVNKIMERRGEPTPVSATI</sequence>
<comment type="function">
    <text evidence="1">Catalyzes the condensation of the acetyl group of acetyl-CoA with 3-methyl-2-oxobutanoate (2-ketoisovalerate) to form 3-carboxy-3-hydroxy-4-methylpentanoate (2-isopropylmalate).</text>
</comment>
<comment type="catalytic activity">
    <reaction evidence="1">
        <text>3-methyl-2-oxobutanoate + acetyl-CoA + H2O = (2S)-2-isopropylmalate + CoA + H(+)</text>
        <dbReference type="Rhea" id="RHEA:21524"/>
        <dbReference type="ChEBI" id="CHEBI:1178"/>
        <dbReference type="ChEBI" id="CHEBI:11851"/>
        <dbReference type="ChEBI" id="CHEBI:15377"/>
        <dbReference type="ChEBI" id="CHEBI:15378"/>
        <dbReference type="ChEBI" id="CHEBI:57287"/>
        <dbReference type="ChEBI" id="CHEBI:57288"/>
        <dbReference type="EC" id="2.3.3.13"/>
    </reaction>
</comment>
<comment type="cofactor">
    <cofactor evidence="1">
        <name>Mn(2+)</name>
        <dbReference type="ChEBI" id="CHEBI:29035"/>
    </cofactor>
</comment>
<comment type="pathway">
    <text evidence="1">Amino-acid biosynthesis; L-leucine biosynthesis; L-leucine from 3-methyl-2-oxobutanoate: step 1/4.</text>
</comment>
<comment type="subunit">
    <text evidence="1">Homodimer.</text>
</comment>
<comment type="subcellular location">
    <subcellularLocation>
        <location evidence="1">Cytoplasm</location>
    </subcellularLocation>
</comment>
<comment type="similarity">
    <text evidence="1">Belongs to the alpha-IPM synthase/homocitrate synthase family. LeuA type 1 subfamily.</text>
</comment>